<evidence type="ECO:0000250" key="1"/>
<evidence type="ECO:0000250" key="2">
    <source>
        <dbReference type="UniProtKB" id="Q10741"/>
    </source>
</evidence>
<evidence type="ECO:0000255" key="3"/>
<evidence type="ECO:0000255" key="4">
    <source>
        <dbReference type="PROSITE-ProRule" id="PRU00068"/>
    </source>
</evidence>
<evidence type="ECO:0000255" key="5">
    <source>
        <dbReference type="PROSITE-ProRule" id="PRU00076"/>
    </source>
</evidence>
<evidence type="ECO:0000255" key="6">
    <source>
        <dbReference type="PROSITE-ProRule" id="PRU00276"/>
    </source>
</evidence>
<evidence type="ECO:0000255" key="7">
    <source>
        <dbReference type="PROSITE-ProRule" id="PRU10095"/>
    </source>
</evidence>
<evidence type="ECO:0000256" key="8">
    <source>
        <dbReference type="SAM" id="MobiDB-lite"/>
    </source>
</evidence>
<evidence type="ECO:0000269" key="9">
    <source>
    </source>
</evidence>
<evidence type="ECO:0000269" key="10">
    <source>
    </source>
</evidence>
<evidence type="ECO:0000269" key="11">
    <source>
    </source>
</evidence>
<evidence type="ECO:0000269" key="12">
    <source>
    </source>
</evidence>
<evidence type="ECO:0000269" key="13">
    <source>
    </source>
</evidence>
<evidence type="ECO:0000303" key="14">
    <source>
    </source>
</evidence>
<evidence type="ECO:0000303" key="15">
    <source>
    </source>
</evidence>
<evidence type="ECO:0000305" key="16"/>
<evidence type="ECO:0007829" key="17">
    <source>
        <dbReference type="PDB" id="4DD8"/>
    </source>
</evidence>
<protein>
    <recommendedName>
        <fullName>Disintegrin and metalloproteinase domain-containing protein 8</fullName>
        <shortName>ADAM 8</shortName>
        <ecNumber>3.4.24.-</ecNumber>
    </recommendedName>
    <alternativeName>
        <fullName>Cell surface antigen MS2</fullName>
    </alternativeName>
    <cdAntigenName>CD156a</cdAntigenName>
</protein>
<name>ADAM8_HUMAN</name>
<proteinExistence type="evidence at protein level"/>
<comment type="function">
    <text>Possible involvement in extravasation of leukocytes.</text>
</comment>
<comment type="cofactor">
    <cofactor evidence="12">
        <name>Zn(2+)</name>
        <dbReference type="ChEBI" id="CHEBI:29105"/>
    </cofactor>
    <text evidence="12">Binds 1 zinc ion per subunit.</text>
</comment>
<comment type="subunit">
    <text evidence="11">Interacts with FST3.</text>
</comment>
<comment type="interaction">
    <interactant intactId="EBI-2625954">
        <id>P78325</id>
    </interactant>
    <interactant intactId="EBI-714058">
        <id>Q5T0N5</id>
        <label>FNBP1L</label>
    </interactant>
    <organismsDiffer>false</organismsDiffer>
    <experiments>2</experiments>
</comment>
<comment type="interaction">
    <interactant intactId="EBI-2625954">
        <id>P78325</id>
    </interactant>
    <interactant intactId="EBI-395044">
        <id>P14598</id>
        <label>NCF1</label>
    </interactant>
    <organismsDiffer>false</organismsDiffer>
    <experiments>2</experiments>
</comment>
<comment type="interaction">
    <interactant intactId="EBI-2625954">
        <id>P78325</id>
    </interactant>
    <interactant intactId="EBI-1383480">
        <id>P42680</id>
        <label>TEC</label>
    </interactant>
    <organismsDiffer>false</organismsDiffer>
    <experiments>2</experiments>
</comment>
<comment type="interaction">
    <interactant intactId="EBI-2625954">
        <id>P78325</id>
    </interactant>
    <interactant intactId="EBI-739936">
        <id>Q15642</id>
        <label>TRIP10</label>
    </interactant>
    <organismsDiffer>false</organismsDiffer>
    <experiments>2</experiments>
</comment>
<comment type="subcellular location">
    <subcellularLocation>
        <location>Membrane</location>
        <topology>Single-pass type I membrane protein</topology>
    </subcellularLocation>
</comment>
<comment type="alternative products">
    <event type="alternative splicing"/>
    <isoform>
        <id>P78325-1</id>
        <name>1</name>
        <sequence type="displayed"/>
    </isoform>
    <isoform>
        <id>P78325-2</id>
        <name>2</name>
        <sequence type="described" ref="VSP_046154 VSP_046155 VSP_046156 VSP_046159"/>
    </isoform>
    <isoform>
        <id>P78325-3</id>
        <name>3</name>
        <sequence type="described" ref="VSP_046157 VSP_046158"/>
    </isoform>
</comment>
<comment type="tissue specificity">
    <text>Expressed on neutrophils and monocytes.</text>
</comment>
<feature type="signal peptide" evidence="3">
    <location>
        <begin position="1"/>
        <end position="16"/>
    </location>
</feature>
<feature type="chain" id="PRO_0000029060" description="Disintegrin and metalloproteinase domain-containing protein 8">
    <location>
        <begin position="17"/>
        <end position="824"/>
    </location>
</feature>
<feature type="topological domain" description="Extracellular" evidence="3">
    <location>
        <begin position="17"/>
        <end position="655"/>
    </location>
</feature>
<feature type="transmembrane region" description="Helical" evidence="3">
    <location>
        <begin position="656"/>
        <end position="676"/>
    </location>
</feature>
<feature type="topological domain" description="Cytoplasmic" evidence="3">
    <location>
        <begin position="677"/>
        <end position="824"/>
    </location>
</feature>
<feature type="domain" description="Peptidase M12B" evidence="6">
    <location>
        <begin position="200"/>
        <end position="400"/>
    </location>
</feature>
<feature type="domain" description="Disintegrin" evidence="4">
    <location>
        <begin position="408"/>
        <end position="494"/>
    </location>
</feature>
<feature type="domain" description="EGF-like" evidence="5">
    <location>
        <begin position="609"/>
        <end position="641"/>
    </location>
</feature>
<feature type="region of interest" description="Disordered" evidence="8">
    <location>
        <begin position="710"/>
        <end position="756"/>
    </location>
</feature>
<feature type="region of interest" description="Disordered" evidence="8">
    <location>
        <begin position="776"/>
        <end position="824"/>
    </location>
</feature>
<feature type="compositionally biased region" description="Pro residues" evidence="8">
    <location>
        <begin position="747"/>
        <end position="756"/>
    </location>
</feature>
<feature type="compositionally biased region" description="Low complexity" evidence="8">
    <location>
        <begin position="788"/>
        <end position="804"/>
    </location>
</feature>
<feature type="active site" evidence="6 7">
    <location>
        <position position="335"/>
    </location>
</feature>
<feature type="binding site" evidence="12">
    <location>
        <position position="334"/>
    </location>
    <ligand>
        <name>Zn(2+)</name>
        <dbReference type="ChEBI" id="CHEBI:29105"/>
        <note>catalytic</note>
    </ligand>
</feature>
<feature type="binding site" evidence="12">
    <location>
        <position position="338"/>
    </location>
    <ligand>
        <name>Zn(2+)</name>
        <dbReference type="ChEBI" id="CHEBI:29105"/>
        <note>catalytic</note>
    </ligand>
</feature>
<feature type="binding site" evidence="12">
    <location>
        <position position="344"/>
    </location>
    <ligand>
        <name>Zn(2+)</name>
        <dbReference type="ChEBI" id="CHEBI:29105"/>
        <note>catalytic</note>
    </ligand>
</feature>
<feature type="glycosylation site" description="N-linked (GlcNAc...) asparagine" evidence="3">
    <location>
        <position position="67"/>
    </location>
</feature>
<feature type="glycosylation site" description="N-linked (GlcNAc...) asparagine" evidence="3">
    <location>
        <position position="91"/>
    </location>
</feature>
<feature type="glycosylation site" description="N-linked (GlcNAc...) asparagine" evidence="3">
    <location>
        <position position="436"/>
    </location>
</feature>
<feature type="glycosylation site" description="N-linked (GlcNAc...) asparagine" evidence="3">
    <location>
        <position position="612"/>
    </location>
</feature>
<feature type="disulfide bond" evidence="1">
    <location>
        <begin position="310"/>
        <end position="395"/>
    </location>
</feature>
<feature type="disulfide bond" evidence="1">
    <location>
        <begin position="351"/>
        <end position="379"/>
    </location>
</feature>
<feature type="disulfide bond" evidence="1">
    <location>
        <begin position="353"/>
        <end position="362"/>
    </location>
</feature>
<feature type="disulfide bond" evidence="2">
    <location>
        <begin position="435"/>
        <end position="457"/>
    </location>
</feature>
<feature type="disulfide bond" evidence="2">
    <location>
        <begin position="448"/>
        <end position="454"/>
    </location>
</feature>
<feature type="disulfide bond" evidence="2">
    <location>
        <begin position="466"/>
        <end position="486"/>
    </location>
</feature>
<feature type="disulfide bond" evidence="2">
    <location>
        <begin position="473"/>
        <end position="503"/>
    </location>
</feature>
<feature type="disulfide bond" evidence="2">
    <location>
        <begin position="498"/>
        <end position="508"/>
    </location>
</feature>
<feature type="disulfide bond" evidence="2">
    <location>
        <begin position="566"/>
        <end position="613"/>
    </location>
</feature>
<feature type="disulfide bond" evidence="1">
    <location>
        <begin position="613"/>
        <end position="623"/>
    </location>
</feature>
<feature type="disulfide bond" evidence="1">
    <location>
        <begin position="617"/>
        <end position="629"/>
    </location>
</feature>
<feature type="disulfide bond" evidence="1">
    <location>
        <begin position="631"/>
        <end position="640"/>
    </location>
</feature>
<feature type="splice variant" id="VSP_046154" description="In isoform 2." evidence="14">
    <original>AIAPSRPWALMEQYEVVLPWRLPGPRVRRALPSHLGLHPERVSYVLGATGHNFTLHLRKNRDLLGSGYTETYTAANG</original>
    <variation>GPAPREGELRPWGHRAQLHPPPAEEQGPAGLRLHRDLYGCQWLRGDGAASRAGPLLLPGPRRGVPGLSRQPQHLCRP</variation>
    <location>
        <begin position="16"/>
        <end position="92"/>
    </location>
</feature>
<feature type="splice variant" id="VSP_046155" description="In isoform 2." evidence="14">
    <location>
        <begin position="93"/>
        <end position="131"/>
    </location>
</feature>
<feature type="splice variant" id="VSP_046156" description="In isoform 2." evidence="14">
    <location>
        <begin position="596"/>
        <end position="621"/>
    </location>
</feature>
<feature type="splice variant" id="VSP_046157" description="In isoform 3." evidence="15">
    <original>ASGSLPVFVVVVLVLLAVVLVTLAGIIVYRKARSRILSRNVAPKTTMGRSNPLFHQAASRVPAKGGAPAPSRGPQELVPTTHPGQPARHPASS</original>
    <variation>GCQPRAGQGRGSSPIQGPPRAGPHHPPGPARPTPGLLGGSEEAAPCSSGHCVQPTLPSSCLHPAGTKAGHQANVRTPSAPSQTRGWCGQPWSS</variation>
    <location>
        <begin position="650"/>
        <end position="742"/>
    </location>
</feature>
<feature type="splice variant" id="VSP_046158" description="In isoform 3." evidence="15">
    <location>
        <begin position="743"/>
        <end position="824"/>
    </location>
</feature>
<feature type="splice variant" id="VSP_046159" description="In isoform 2." evidence="14">
    <location>
        <begin position="774"/>
        <end position="799"/>
    </location>
</feature>
<feature type="sequence variant" id="VAR_069144" description="In dbSNP:rs2275725." evidence="10 13">
    <original>W</original>
    <variation>R</variation>
    <location>
        <position position="35"/>
    </location>
</feature>
<feature type="sequence variant" id="VAR_059760" description="In dbSNP:rs11101675.">
    <original>G</original>
    <variation>R</variation>
    <location>
        <position position="101"/>
    </location>
</feature>
<feature type="sequence variant" id="VAR_061735" description="In dbSNP:rs45451297.">
    <original>R</original>
    <variation>W</variation>
    <location>
        <position position="189"/>
    </location>
</feature>
<feature type="sequence variant" id="VAR_061736" description="In dbSNP:rs12257830.">
    <original>R</original>
    <variation>C</variation>
    <location>
        <position position="433"/>
    </location>
</feature>
<feature type="sequence variant" id="VAR_069145" description="In dbSNP:rs2275720." evidence="9">
    <original>F</original>
    <variation>L</variation>
    <location>
        <position position="657"/>
    </location>
</feature>
<feature type="sequence variant" id="VAR_061737" description="In dbSNP:rs3008319.">
    <original>I</original>
    <variation>T</variation>
    <location>
        <position position="775"/>
    </location>
</feature>
<feature type="sequence conflict" description="In Ref. 1; BAA05626." evidence="16" ref="1">
    <original>F</original>
    <variation>L</variation>
    <location>
        <position position="106"/>
    </location>
</feature>
<feature type="sequence conflict" description="In Ref. 2; BAG62738." evidence="16" ref="2">
    <original>F</original>
    <variation>L</variation>
    <location>
        <position position="372"/>
    </location>
</feature>
<feature type="sequence conflict" description="In Ref. 2; BAG62738." evidence="16" ref="2">
    <original>H</original>
    <variation>D</variation>
    <location>
        <position position="648"/>
    </location>
</feature>
<feature type="strand" evidence="17">
    <location>
        <begin position="200"/>
        <end position="208"/>
    </location>
</feature>
<feature type="helix" evidence="17">
    <location>
        <begin position="210"/>
        <end position="216"/>
    </location>
</feature>
<feature type="helix" evidence="17">
    <location>
        <begin position="219"/>
        <end position="237"/>
    </location>
</feature>
<feature type="helix" evidence="17">
    <location>
        <begin position="238"/>
        <end position="240"/>
    </location>
</feature>
<feature type="strand" evidence="17">
    <location>
        <begin position="242"/>
        <end position="251"/>
    </location>
</feature>
<feature type="helix" evidence="17">
    <location>
        <begin position="264"/>
        <end position="276"/>
    </location>
</feature>
<feature type="turn" evidence="17">
    <location>
        <begin position="279"/>
        <end position="281"/>
    </location>
</feature>
<feature type="strand" evidence="17">
    <location>
        <begin position="286"/>
        <end position="292"/>
    </location>
</feature>
<feature type="strand" evidence="17">
    <location>
        <begin position="302"/>
        <end position="304"/>
    </location>
</feature>
<feature type="strand" evidence="17">
    <location>
        <begin position="315"/>
        <end position="319"/>
    </location>
</feature>
<feature type="helix" evidence="17">
    <location>
        <begin position="325"/>
        <end position="339"/>
    </location>
</feature>
<feature type="helix" evidence="17">
    <location>
        <begin position="345"/>
        <end position="347"/>
    </location>
</feature>
<feature type="helix" evidence="17">
    <location>
        <begin position="378"/>
        <end position="387"/>
    </location>
</feature>
<feature type="helix" evidence="17">
    <location>
        <begin position="391"/>
        <end position="396"/>
    </location>
</feature>
<feature type="sequence conflict" description="In Ref. 2; BAG62738." evidence="16" ref="2">
    <original>L</original>
    <variation>F</variation>
    <location sequence="P78325-2">
        <position position="46"/>
    </location>
</feature>
<feature type="sequence conflict" description="In Ref. 4; BC064500." evidence="16" ref="4">
    <original>A</original>
    <variation>S</variation>
    <location sequence="P78325-3">
        <position position="693"/>
    </location>
</feature>
<organism>
    <name type="scientific">Homo sapiens</name>
    <name type="common">Human</name>
    <dbReference type="NCBI Taxonomy" id="9606"/>
    <lineage>
        <taxon>Eukaryota</taxon>
        <taxon>Metazoa</taxon>
        <taxon>Chordata</taxon>
        <taxon>Craniata</taxon>
        <taxon>Vertebrata</taxon>
        <taxon>Euteleostomi</taxon>
        <taxon>Mammalia</taxon>
        <taxon>Eutheria</taxon>
        <taxon>Euarchontoglires</taxon>
        <taxon>Primates</taxon>
        <taxon>Haplorrhini</taxon>
        <taxon>Catarrhini</taxon>
        <taxon>Hominidae</taxon>
        <taxon>Homo</taxon>
    </lineage>
</organism>
<sequence>MRGLGLWLLGAMMLPAIAPSRPWALMEQYEVVLPWRLPGPRVRRALPSHLGLHPERVSYVLGATGHNFTLHLRKNRDLLGSGYTETYTAANGSEVTEQPRGQDHCFYQGHVEGYPDSAASLSTCAGLRGFFQVGSDLHLIEPLDEGGEGGRHAVYQAEHLLQTAGTCGVSDDSLGSLLGPRTAAVFRPRPGDSLPSRETRYVELYVVVDNAEFQMLGSEAAVRHRVLEVVNHVDKLYQKLNFRVVLVGLEIWNSQDRFHVSPDPSVTLENLLTWQARQRTRRHLHDNVQLITGVDFTGTTVGFARVSAMCSHSSGAVNQDHSKNPVGVACTMAHEMGHNLGMDHDENVQGCRCQERFEAGRCIMAGSIGSSFPRMFSDCSQAYLESFLERPQSVCLANAPDLSHLVGGPVCGNLFVERGEQCDCGPPEDCRNRCCNSTTCQLAEGAQCAHGTCCQECKVKPAGELCRPKKDMCDLEEFCDGRHPECPEDAFQENGTPCSGGYCYNGACPTLAQQCQAFWGPGGQAAEESCFSYDILPGCKASRYRADMCGVLQCKGGQQPLGRAICIVDVCHALTTEDGTAYEPVPEGTRCGPEKVCWKGRCQDLHVYRSSNCSAQCHNHGVCNHKQECHCHAGWAPPHCAKLLTEVHAASGSLPVFVVVVLVLLAVVLVTLAGIIVYRKARSRILSRNVAPKTTMGRSNPLFHQAASRVPAKGGAPAPSRGPQELVPTTHPGQPARHPASSVALKRPPPAPPVTVSSPPFPVPVYTRQAPKQVIKPTFAPPVPPVKPGAGAANPGPAEGAVGPKVALKPPIQRKQGAGAPTAP</sequence>
<accession>P78325</accession>
<accession>B4DVM6</accession>
<accession>H0YL36</accession>
<accession>H0YLR0</accession>
<accession>H0YN39</accession>
<keyword id="KW-0002">3D-structure</keyword>
<keyword id="KW-0025">Alternative splicing</keyword>
<keyword id="KW-1015">Disulfide bond</keyword>
<keyword id="KW-0245">EGF-like domain</keyword>
<keyword id="KW-0325">Glycoprotein</keyword>
<keyword id="KW-0378">Hydrolase</keyword>
<keyword id="KW-0472">Membrane</keyword>
<keyword id="KW-0479">Metal-binding</keyword>
<keyword id="KW-0482">Metalloprotease</keyword>
<keyword id="KW-0645">Protease</keyword>
<keyword id="KW-1267">Proteomics identification</keyword>
<keyword id="KW-1185">Reference proteome</keyword>
<keyword id="KW-0732">Signal</keyword>
<keyword id="KW-0812">Transmembrane</keyword>
<keyword id="KW-1133">Transmembrane helix</keyword>
<keyword id="KW-0862">Zinc</keyword>
<dbReference type="EC" id="3.4.24.-"/>
<dbReference type="EMBL" id="D26579">
    <property type="protein sequence ID" value="BAA05626.1"/>
    <property type="molecule type" value="mRNA"/>
</dbReference>
<dbReference type="EMBL" id="AK301147">
    <property type="protein sequence ID" value="BAG62738.1"/>
    <property type="molecule type" value="mRNA"/>
</dbReference>
<dbReference type="EMBL" id="AL592071">
    <property type="status" value="NOT_ANNOTATED_CDS"/>
    <property type="molecule type" value="Genomic_DNA"/>
</dbReference>
<dbReference type="EMBL" id="BC064500">
    <property type="status" value="NOT_ANNOTATED_CDS"/>
    <property type="molecule type" value="mRNA"/>
</dbReference>
<dbReference type="CCDS" id="CCDS31319.2">
    <molecule id="P78325-1"/>
</dbReference>
<dbReference type="CCDS" id="CCDS58102.1">
    <molecule id="P78325-2"/>
</dbReference>
<dbReference type="CCDS" id="CCDS58103.1">
    <molecule id="P78325-3"/>
</dbReference>
<dbReference type="RefSeq" id="NP_001100.3">
    <molecule id="P78325-1"/>
    <property type="nucleotide sequence ID" value="NM_001109.5"/>
</dbReference>
<dbReference type="RefSeq" id="NP_001157961.1">
    <molecule id="P78325-3"/>
    <property type="nucleotide sequence ID" value="NM_001164489.2"/>
</dbReference>
<dbReference type="RefSeq" id="NP_001157962.1">
    <molecule id="P78325-2"/>
    <property type="nucleotide sequence ID" value="NM_001164490.2"/>
</dbReference>
<dbReference type="PDB" id="4DD8">
    <property type="method" value="X-ray"/>
    <property type="resolution" value="2.10 A"/>
    <property type="chains" value="A/B/C/D=196-403"/>
</dbReference>
<dbReference type="PDBsum" id="4DD8"/>
<dbReference type="SMR" id="P78325"/>
<dbReference type="BioGRID" id="106615">
    <property type="interactions" value="4"/>
</dbReference>
<dbReference type="CORUM" id="P78325"/>
<dbReference type="FunCoup" id="P78325">
    <property type="interactions" value="227"/>
</dbReference>
<dbReference type="IntAct" id="P78325">
    <property type="interactions" value="12"/>
</dbReference>
<dbReference type="STRING" id="9606.ENSP00000453302"/>
<dbReference type="BindingDB" id="P78325"/>
<dbReference type="ChEMBL" id="CHEMBL5665"/>
<dbReference type="GuidetoPHARMACOLOGY" id="1656"/>
<dbReference type="MEROPS" id="M12.208"/>
<dbReference type="GlyConnect" id="1996">
    <property type="glycosylation" value="2 N-Linked glycans (1 site)"/>
</dbReference>
<dbReference type="GlyCosmos" id="P78325">
    <property type="glycosylation" value="4 sites, 2 glycans"/>
</dbReference>
<dbReference type="GlyGen" id="P78325">
    <property type="glycosylation" value="5 sites, 2 N-linked glycans (1 site)"/>
</dbReference>
<dbReference type="iPTMnet" id="P78325"/>
<dbReference type="PhosphoSitePlus" id="P78325"/>
<dbReference type="SwissPalm" id="P78325"/>
<dbReference type="BioMuta" id="ADAM8"/>
<dbReference type="DMDM" id="408359955"/>
<dbReference type="jPOST" id="P78325"/>
<dbReference type="MassIVE" id="P78325"/>
<dbReference type="PaxDb" id="9606-ENSP00000453302"/>
<dbReference type="PeptideAtlas" id="P78325"/>
<dbReference type="ProteomicsDB" id="39834"/>
<dbReference type="ProteomicsDB" id="40029"/>
<dbReference type="ProteomicsDB" id="40447"/>
<dbReference type="ProteomicsDB" id="57567">
    <molecule id="P78325-1"/>
</dbReference>
<dbReference type="ABCD" id="P78325">
    <property type="antibodies" value="19 sequenced antibodies"/>
</dbReference>
<dbReference type="Antibodypedia" id="19390">
    <property type="antibodies" value="396 antibodies from 38 providers"/>
</dbReference>
<dbReference type="DNASU" id="101"/>
<dbReference type="Ensembl" id="ENST00000415217.7">
    <molecule id="P78325-3"/>
    <property type="protein sequence ID" value="ENSP00000453855.1"/>
    <property type="gene ID" value="ENSG00000151651.16"/>
</dbReference>
<dbReference type="Ensembl" id="ENST00000445355.8">
    <molecule id="P78325-1"/>
    <property type="protein sequence ID" value="ENSP00000453302.1"/>
    <property type="gene ID" value="ENSG00000151651.16"/>
</dbReference>
<dbReference type="Ensembl" id="ENST00000485491.6">
    <molecule id="P78325-2"/>
    <property type="protein sequence ID" value="ENSP00000453043.1"/>
    <property type="gene ID" value="ENSG00000151651.16"/>
</dbReference>
<dbReference type="GeneID" id="101"/>
<dbReference type="KEGG" id="hsa:101"/>
<dbReference type="MANE-Select" id="ENST00000445355.8">
    <property type="protein sequence ID" value="ENSP00000453302.1"/>
    <property type="RefSeq nucleotide sequence ID" value="NM_001109.5"/>
    <property type="RefSeq protein sequence ID" value="NP_001100.3"/>
</dbReference>
<dbReference type="UCSC" id="uc009ybi.4">
    <molecule id="P78325-1"/>
    <property type="organism name" value="human"/>
</dbReference>
<dbReference type="AGR" id="HGNC:215"/>
<dbReference type="CTD" id="101"/>
<dbReference type="DisGeNET" id="101"/>
<dbReference type="GeneCards" id="ADAM8"/>
<dbReference type="HGNC" id="HGNC:215">
    <property type="gene designation" value="ADAM8"/>
</dbReference>
<dbReference type="HPA" id="ENSG00000151651">
    <property type="expression patterns" value="Tissue enhanced (bone marrow, lymphoid tissue)"/>
</dbReference>
<dbReference type="MIM" id="602267">
    <property type="type" value="gene"/>
</dbReference>
<dbReference type="neXtProt" id="NX_P78325"/>
<dbReference type="OpenTargets" id="ENSG00000151651"/>
<dbReference type="VEuPathDB" id="HostDB:ENSG00000151651"/>
<dbReference type="eggNOG" id="KOG3607">
    <property type="taxonomic scope" value="Eukaryota"/>
</dbReference>
<dbReference type="GeneTree" id="ENSGT00940000158585"/>
<dbReference type="HOGENOM" id="CLU_012714_7_1_1"/>
<dbReference type="InParanoid" id="P78325"/>
<dbReference type="OMA" id="HGQDHCL"/>
<dbReference type="OrthoDB" id="5951731at2759"/>
<dbReference type="PAN-GO" id="P78325">
    <property type="GO annotations" value="6 GO annotations based on evolutionary models"/>
</dbReference>
<dbReference type="PhylomeDB" id="P78325"/>
<dbReference type="TreeFam" id="TF314733"/>
<dbReference type="PathwayCommons" id="P78325"/>
<dbReference type="Reactome" id="R-HSA-1474228">
    <property type="pathway name" value="Degradation of the extracellular matrix"/>
</dbReference>
<dbReference type="Reactome" id="R-HSA-6798695">
    <property type="pathway name" value="Neutrophil degranulation"/>
</dbReference>
<dbReference type="SignaLink" id="P78325"/>
<dbReference type="BioGRID-ORCS" id="101">
    <property type="hits" value="8 hits in 1156 CRISPR screens"/>
</dbReference>
<dbReference type="ChiTaRS" id="ADAM8">
    <property type="organism name" value="human"/>
</dbReference>
<dbReference type="EvolutionaryTrace" id="P78325"/>
<dbReference type="GeneWiki" id="ADAM8"/>
<dbReference type="GenomeRNAi" id="101"/>
<dbReference type="Pharos" id="P78325">
    <property type="development level" value="Tchem"/>
</dbReference>
<dbReference type="PRO" id="PR:P78325"/>
<dbReference type="Proteomes" id="UP000005640">
    <property type="component" value="Chromosome 10"/>
</dbReference>
<dbReference type="RNAct" id="P78325">
    <property type="molecule type" value="protein"/>
</dbReference>
<dbReference type="Bgee" id="ENSG00000151651">
    <property type="expression patterns" value="Expressed in granulocyte and 118 other cell types or tissues"/>
</dbReference>
<dbReference type="ExpressionAtlas" id="P78325">
    <property type="expression patterns" value="baseline and differential"/>
</dbReference>
<dbReference type="GO" id="GO:0071133">
    <property type="term" value="C:alpha9-beta1 integrin-ADAM8 complex"/>
    <property type="evidence" value="ECO:0000250"/>
    <property type="project" value="BHF-UCL"/>
</dbReference>
<dbReference type="GO" id="GO:0009986">
    <property type="term" value="C:cell surface"/>
    <property type="evidence" value="ECO:0000314"/>
    <property type="project" value="BHF-UCL"/>
</dbReference>
<dbReference type="GO" id="GO:0005737">
    <property type="term" value="C:cytoplasm"/>
    <property type="evidence" value="ECO:0000314"/>
    <property type="project" value="BHF-UCL"/>
</dbReference>
<dbReference type="GO" id="GO:0032127">
    <property type="term" value="C:dense core granule membrane"/>
    <property type="evidence" value="ECO:0000314"/>
    <property type="project" value="BHF-UCL"/>
</dbReference>
<dbReference type="GO" id="GO:0101003">
    <property type="term" value="C:ficolin-1-rich granule membrane"/>
    <property type="evidence" value="ECO:0000304"/>
    <property type="project" value="Reactome"/>
</dbReference>
<dbReference type="GO" id="GO:0032010">
    <property type="term" value="C:phagolysosome"/>
    <property type="evidence" value="ECO:0000314"/>
    <property type="project" value="BHF-UCL"/>
</dbReference>
<dbReference type="GO" id="GO:0005886">
    <property type="term" value="C:plasma membrane"/>
    <property type="evidence" value="ECO:0000314"/>
    <property type="project" value="BHF-UCL"/>
</dbReference>
<dbReference type="GO" id="GO:0002102">
    <property type="term" value="C:podosome"/>
    <property type="evidence" value="ECO:0000314"/>
    <property type="project" value="BHF-UCL"/>
</dbReference>
<dbReference type="GO" id="GO:0042581">
    <property type="term" value="C:specific granule"/>
    <property type="evidence" value="ECO:0000314"/>
    <property type="project" value="BHF-UCL"/>
</dbReference>
<dbReference type="GO" id="GO:0035579">
    <property type="term" value="C:specific granule membrane"/>
    <property type="evidence" value="ECO:0000304"/>
    <property type="project" value="Reactome"/>
</dbReference>
<dbReference type="GO" id="GO:0070820">
    <property type="term" value="C:tertiary granule"/>
    <property type="evidence" value="ECO:0000314"/>
    <property type="project" value="BHF-UCL"/>
</dbReference>
<dbReference type="GO" id="GO:0070821">
    <property type="term" value="C:tertiary granule membrane"/>
    <property type="evidence" value="ECO:0000304"/>
    <property type="project" value="Reactome"/>
</dbReference>
<dbReference type="GO" id="GO:0005509">
    <property type="term" value="F:calcium ion binding"/>
    <property type="evidence" value="ECO:0000250"/>
    <property type="project" value="BHF-UCL"/>
</dbReference>
<dbReference type="GO" id="GO:0050839">
    <property type="term" value="F:cell adhesion molecule binding"/>
    <property type="evidence" value="ECO:0000318"/>
    <property type="project" value="GO_Central"/>
</dbReference>
<dbReference type="GO" id="GO:0034987">
    <property type="term" value="F:immunoglobulin receptor binding"/>
    <property type="evidence" value="ECO:0000353"/>
    <property type="project" value="BHF-UCL"/>
</dbReference>
<dbReference type="GO" id="GO:0004222">
    <property type="term" value="F:metalloendopeptidase activity"/>
    <property type="evidence" value="ECO:0000318"/>
    <property type="project" value="GO_Central"/>
</dbReference>
<dbReference type="GO" id="GO:0008237">
    <property type="term" value="F:metallopeptidase activity"/>
    <property type="evidence" value="ECO:0000314"/>
    <property type="project" value="BHF-UCL"/>
</dbReference>
<dbReference type="GO" id="GO:0004252">
    <property type="term" value="F:serine-type endopeptidase activity"/>
    <property type="evidence" value="ECO:0000304"/>
    <property type="project" value="Reactome"/>
</dbReference>
<dbReference type="GO" id="GO:0032813">
    <property type="term" value="F:tumor necrosis factor receptor superfamily binding"/>
    <property type="evidence" value="ECO:0000353"/>
    <property type="project" value="BHF-UCL"/>
</dbReference>
<dbReference type="GO" id="GO:0008270">
    <property type="term" value="F:zinc ion binding"/>
    <property type="evidence" value="ECO:0000304"/>
    <property type="project" value="BHF-UCL"/>
</dbReference>
<dbReference type="GO" id="GO:0001525">
    <property type="term" value="P:angiogenesis"/>
    <property type="evidence" value="ECO:0000250"/>
    <property type="project" value="BHF-UCL"/>
</dbReference>
<dbReference type="GO" id="GO:0007249">
    <property type="term" value="P:canonical NF-kappaB signal transduction"/>
    <property type="evidence" value="ECO:0000250"/>
    <property type="project" value="BHF-UCL"/>
</dbReference>
<dbReference type="GO" id="GO:0000902">
    <property type="term" value="P:cell morphogenesis"/>
    <property type="evidence" value="ECO:0000250"/>
    <property type="project" value="BHF-UCL"/>
</dbReference>
<dbReference type="GO" id="GO:0098609">
    <property type="term" value="P:cell-cell adhesion"/>
    <property type="evidence" value="ECO:0007669"/>
    <property type="project" value="Ensembl"/>
</dbReference>
<dbReference type="GO" id="GO:0071456">
    <property type="term" value="P:cellular response to hypoxia"/>
    <property type="evidence" value="ECO:0000314"/>
    <property type="project" value="BHF-UCL"/>
</dbReference>
<dbReference type="GO" id="GO:0022617">
    <property type="term" value="P:extracellular matrix disassembly"/>
    <property type="evidence" value="ECO:0000304"/>
    <property type="project" value="Reactome"/>
</dbReference>
<dbReference type="GO" id="GO:0006954">
    <property type="term" value="P:inflammatory response"/>
    <property type="evidence" value="ECO:0000314"/>
    <property type="project" value="BHF-UCL"/>
</dbReference>
<dbReference type="GO" id="GO:0002523">
    <property type="term" value="P:leukocyte migration involved in inflammatory response"/>
    <property type="evidence" value="ECO:0000250"/>
    <property type="project" value="BHF-UCL"/>
</dbReference>
<dbReference type="GO" id="GO:0048247">
    <property type="term" value="P:lymphocyte chemotaxis"/>
    <property type="evidence" value="ECO:0000250"/>
    <property type="project" value="BHF-UCL"/>
</dbReference>
<dbReference type="GO" id="GO:0043524">
    <property type="term" value="P:negative regulation of neuron apoptotic process"/>
    <property type="evidence" value="ECO:0000250"/>
    <property type="project" value="BHF-UCL"/>
</dbReference>
<dbReference type="GO" id="GO:0002675">
    <property type="term" value="P:positive regulation of acute inflammatory response"/>
    <property type="evidence" value="ECO:0000250"/>
    <property type="project" value="BHF-UCL"/>
</dbReference>
<dbReference type="GO" id="GO:0045780">
    <property type="term" value="P:positive regulation of bone resorption"/>
    <property type="evidence" value="ECO:0000250"/>
    <property type="project" value="BHF-UCL"/>
</dbReference>
<dbReference type="GO" id="GO:0045785">
    <property type="term" value="P:positive regulation of cell adhesion"/>
    <property type="evidence" value="ECO:0000250"/>
    <property type="project" value="BHF-UCL"/>
</dbReference>
<dbReference type="GO" id="GO:0002693">
    <property type="term" value="P:positive regulation of cellular extravasation"/>
    <property type="evidence" value="ECO:0000318"/>
    <property type="project" value="GO_Central"/>
</dbReference>
<dbReference type="GO" id="GO:2000418">
    <property type="term" value="P:positive regulation of eosinophil migration"/>
    <property type="evidence" value="ECO:0000250"/>
    <property type="project" value="BHF-UCL"/>
</dbReference>
<dbReference type="GO" id="GO:0010718">
    <property type="term" value="P:positive regulation of epithelial to mesenchymal transition"/>
    <property type="evidence" value="ECO:0000250"/>
    <property type="project" value="UniProtKB"/>
</dbReference>
<dbReference type="GO" id="GO:2000415">
    <property type="term" value="P:positive regulation of fibronectin-dependent thymocyte migration"/>
    <property type="evidence" value="ECO:0000250"/>
    <property type="project" value="BHF-UCL"/>
</dbReference>
<dbReference type="GO" id="GO:0045089">
    <property type="term" value="P:positive regulation of innate immune response"/>
    <property type="evidence" value="ECO:0000250"/>
    <property type="project" value="BHF-UCL"/>
</dbReference>
<dbReference type="GO" id="GO:0043410">
    <property type="term" value="P:positive regulation of MAPK cascade"/>
    <property type="evidence" value="ECO:0000250"/>
    <property type="project" value="BHF-UCL"/>
</dbReference>
<dbReference type="GO" id="GO:0051044">
    <property type="term" value="P:positive regulation of membrane protein ectodomain proteolysis"/>
    <property type="evidence" value="ECO:0000314"/>
    <property type="project" value="BHF-UCL"/>
</dbReference>
<dbReference type="GO" id="GO:2000391">
    <property type="term" value="P:positive regulation of neutrophil extravasation"/>
    <property type="evidence" value="ECO:0000314"/>
    <property type="project" value="BHF-UCL"/>
</dbReference>
<dbReference type="GO" id="GO:0051897">
    <property type="term" value="P:positive regulation of phosphatidylinositol 3-kinase/protein kinase B signal transduction"/>
    <property type="evidence" value="ECO:0000250"/>
    <property type="project" value="BHF-UCL"/>
</dbReference>
<dbReference type="GO" id="GO:0010954">
    <property type="term" value="P:positive regulation of protein processing"/>
    <property type="evidence" value="ECO:0000303"/>
    <property type="project" value="BHF-UCL"/>
</dbReference>
<dbReference type="GO" id="GO:0050714">
    <property type="term" value="P:positive regulation of protein secretion"/>
    <property type="evidence" value="ECO:0000305"/>
    <property type="project" value="BHF-UCL"/>
</dbReference>
<dbReference type="GO" id="GO:0033089">
    <property type="term" value="P:positive regulation of T cell differentiation in thymus"/>
    <property type="evidence" value="ECO:0000250"/>
    <property type="project" value="BHF-UCL"/>
</dbReference>
<dbReference type="GO" id="GO:0070245">
    <property type="term" value="P:positive regulation of thymocyte apoptotic process"/>
    <property type="evidence" value="ECO:0000250"/>
    <property type="project" value="BHF-UCL"/>
</dbReference>
<dbReference type="GO" id="GO:2000309">
    <property type="term" value="P:positive regulation of tumor necrosis factor (ligand) superfamily member 11 production"/>
    <property type="evidence" value="ECO:0000250"/>
    <property type="project" value="BHF-UCL"/>
</dbReference>
<dbReference type="GO" id="GO:0006508">
    <property type="term" value="P:proteolysis"/>
    <property type="evidence" value="ECO:0000318"/>
    <property type="project" value="GO_Central"/>
</dbReference>
<dbReference type="GO" id="GO:0022407">
    <property type="term" value="P:regulation of cell-cell adhesion"/>
    <property type="evidence" value="ECO:0000314"/>
    <property type="project" value="BHF-UCL"/>
</dbReference>
<dbReference type="GO" id="GO:0023061">
    <property type="term" value="P:signal release"/>
    <property type="evidence" value="ECO:0000314"/>
    <property type="project" value="BHF-UCL"/>
</dbReference>
<dbReference type="CDD" id="cd04269">
    <property type="entry name" value="ZnMc_adamalysin_II_like"/>
    <property type="match status" value="1"/>
</dbReference>
<dbReference type="FunFam" id="3.40.390.10:FF:000002">
    <property type="entry name" value="Disintegrin and metalloproteinase domain-containing protein 22"/>
    <property type="match status" value="1"/>
</dbReference>
<dbReference type="FunFam" id="4.10.70.10:FF:000001">
    <property type="entry name" value="Disintegrin and metalloproteinase domain-containing protein 22"/>
    <property type="match status" value="1"/>
</dbReference>
<dbReference type="Gene3D" id="3.40.1620.60">
    <property type="match status" value="1"/>
</dbReference>
<dbReference type="Gene3D" id="3.40.390.10">
    <property type="entry name" value="Collagenase (Catalytic Domain)"/>
    <property type="match status" value="1"/>
</dbReference>
<dbReference type="Gene3D" id="4.10.70.10">
    <property type="entry name" value="Disintegrin domain"/>
    <property type="match status" value="1"/>
</dbReference>
<dbReference type="InterPro" id="IPR006586">
    <property type="entry name" value="ADAM_Cys-rich"/>
</dbReference>
<dbReference type="InterPro" id="IPR018358">
    <property type="entry name" value="Disintegrin_CS"/>
</dbReference>
<dbReference type="InterPro" id="IPR001762">
    <property type="entry name" value="Disintegrin_dom"/>
</dbReference>
<dbReference type="InterPro" id="IPR036436">
    <property type="entry name" value="Disintegrin_dom_sf"/>
</dbReference>
<dbReference type="InterPro" id="IPR000742">
    <property type="entry name" value="EGF-like_dom"/>
</dbReference>
<dbReference type="InterPro" id="IPR024079">
    <property type="entry name" value="MetalloPept_cat_dom_sf"/>
</dbReference>
<dbReference type="InterPro" id="IPR001590">
    <property type="entry name" value="Peptidase_M12B"/>
</dbReference>
<dbReference type="InterPro" id="IPR002870">
    <property type="entry name" value="Peptidase_M12B_N"/>
</dbReference>
<dbReference type="InterPro" id="IPR034027">
    <property type="entry name" value="Reprolysin_adamalysin"/>
</dbReference>
<dbReference type="PANTHER" id="PTHR11905">
    <property type="entry name" value="ADAM A DISINTEGRIN AND METALLOPROTEASE DOMAIN"/>
    <property type="match status" value="1"/>
</dbReference>
<dbReference type="PANTHER" id="PTHR11905:SF20">
    <property type="entry name" value="DISINTEGRIN AND METALLOPROTEINASE DOMAIN-CONTAINING PROTEIN 8"/>
    <property type="match status" value="1"/>
</dbReference>
<dbReference type="Pfam" id="PF08516">
    <property type="entry name" value="ADAM_CR"/>
    <property type="match status" value="1"/>
</dbReference>
<dbReference type="Pfam" id="PF00200">
    <property type="entry name" value="Disintegrin"/>
    <property type="match status" value="1"/>
</dbReference>
<dbReference type="Pfam" id="PF01562">
    <property type="entry name" value="Pep_M12B_propep"/>
    <property type="match status" value="1"/>
</dbReference>
<dbReference type="Pfam" id="PF01421">
    <property type="entry name" value="Reprolysin"/>
    <property type="match status" value="1"/>
</dbReference>
<dbReference type="PRINTS" id="PR00289">
    <property type="entry name" value="DISINTEGRIN"/>
</dbReference>
<dbReference type="SMART" id="SM00608">
    <property type="entry name" value="ACR"/>
    <property type="match status" value="1"/>
</dbReference>
<dbReference type="SMART" id="SM00050">
    <property type="entry name" value="DISIN"/>
    <property type="match status" value="1"/>
</dbReference>
<dbReference type="SUPFAM" id="SSF57552">
    <property type="entry name" value="Blood coagulation inhibitor (disintegrin)"/>
    <property type="match status" value="1"/>
</dbReference>
<dbReference type="SUPFAM" id="SSF55486">
    <property type="entry name" value="Metalloproteases ('zincins'), catalytic domain"/>
    <property type="match status" value="1"/>
</dbReference>
<dbReference type="PROSITE" id="PS50215">
    <property type="entry name" value="ADAM_MEPRO"/>
    <property type="match status" value="1"/>
</dbReference>
<dbReference type="PROSITE" id="PS00427">
    <property type="entry name" value="DISINTEGRIN_1"/>
    <property type="match status" value="1"/>
</dbReference>
<dbReference type="PROSITE" id="PS50214">
    <property type="entry name" value="DISINTEGRIN_2"/>
    <property type="match status" value="1"/>
</dbReference>
<dbReference type="PROSITE" id="PS01186">
    <property type="entry name" value="EGF_2"/>
    <property type="match status" value="1"/>
</dbReference>
<dbReference type="PROSITE" id="PS50026">
    <property type="entry name" value="EGF_3"/>
    <property type="match status" value="1"/>
</dbReference>
<dbReference type="PROSITE" id="PS00142">
    <property type="entry name" value="ZINC_PROTEASE"/>
    <property type="match status" value="1"/>
</dbReference>
<gene>
    <name type="primary">ADAM8</name>
    <name type="synonym">MS2</name>
</gene>
<reference key="1">
    <citation type="journal article" date="1997" name="Genomics">
        <title>CD156 (human ADAM8): expression, primary amino acid sequence, and gene location.</title>
        <authorList>
            <person name="Yoshiyama K."/>
            <person name="Higuchi Y."/>
            <person name="Kataoka M."/>
            <person name="Matsuura K."/>
            <person name="Yamamoto S."/>
        </authorList>
    </citation>
    <scope>NUCLEOTIDE SEQUENCE [MRNA] (ISOFORM 1)</scope>
    <scope>VARIANT ARG-35</scope>
    <source>
        <tissue>Blood</tissue>
    </source>
</reference>
<reference key="2">
    <citation type="journal article" date="2004" name="Nat. Genet.">
        <title>Complete sequencing and characterization of 21,243 full-length human cDNAs.</title>
        <authorList>
            <person name="Ota T."/>
            <person name="Suzuki Y."/>
            <person name="Nishikawa T."/>
            <person name="Otsuki T."/>
            <person name="Sugiyama T."/>
            <person name="Irie R."/>
            <person name="Wakamatsu A."/>
            <person name="Hayashi K."/>
            <person name="Sato H."/>
            <person name="Nagai K."/>
            <person name="Kimura K."/>
            <person name="Makita H."/>
            <person name="Sekine M."/>
            <person name="Obayashi M."/>
            <person name="Nishi T."/>
            <person name="Shibahara T."/>
            <person name="Tanaka T."/>
            <person name="Ishii S."/>
            <person name="Yamamoto J."/>
            <person name="Saito K."/>
            <person name="Kawai Y."/>
            <person name="Isono Y."/>
            <person name="Nakamura Y."/>
            <person name="Nagahari K."/>
            <person name="Murakami K."/>
            <person name="Yasuda T."/>
            <person name="Iwayanagi T."/>
            <person name="Wagatsuma M."/>
            <person name="Shiratori A."/>
            <person name="Sudo H."/>
            <person name="Hosoiri T."/>
            <person name="Kaku Y."/>
            <person name="Kodaira H."/>
            <person name="Kondo H."/>
            <person name="Sugawara M."/>
            <person name="Takahashi M."/>
            <person name="Kanda K."/>
            <person name="Yokoi T."/>
            <person name="Furuya T."/>
            <person name="Kikkawa E."/>
            <person name="Omura Y."/>
            <person name="Abe K."/>
            <person name="Kamihara K."/>
            <person name="Katsuta N."/>
            <person name="Sato K."/>
            <person name="Tanikawa M."/>
            <person name="Yamazaki M."/>
            <person name="Ninomiya K."/>
            <person name="Ishibashi T."/>
            <person name="Yamashita H."/>
            <person name="Murakawa K."/>
            <person name="Fujimori K."/>
            <person name="Tanai H."/>
            <person name="Kimata M."/>
            <person name="Watanabe M."/>
            <person name="Hiraoka S."/>
            <person name="Chiba Y."/>
            <person name="Ishida S."/>
            <person name="Ono Y."/>
            <person name="Takiguchi S."/>
            <person name="Watanabe S."/>
            <person name="Yosida M."/>
            <person name="Hotuta T."/>
            <person name="Kusano J."/>
            <person name="Kanehori K."/>
            <person name="Takahashi-Fujii A."/>
            <person name="Hara H."/>
            <person name="Tanase T.-O."/>
            <person name="Nomura Y."/>
            <person name="Togiya S."/>
            <person name="Komai F."/>
            <person name="Hara R."/>
            <person name="Takeuchi K."/>
            <person name="Arita M."/>
            <person name="Imose N."/>
            <person name="Musashino K."/>
            <person name="Yuuki H."/>
            <person name="Oshima A."/>
            <person name="Sasaki N."/>
            <person name="Aotsuka S."/>
            <person name="Yoshikawa Y."/>
            <person name="Matsunawa H."/>
            <person name="Ichihara T."/>
            <person name="Shiohata N."/>
            <person name="Sano S."/>
            <person name="Moriya S."/>
            <person name="Momiyama H."/>
            <person name="Satoh N."/>
            <person name="Takami S."/>
            <person name="Terashima Y."/>
            <person name="Suzuki O."/>
            <person name="Nakagawa S."/>
            <person name="Senoh A."/>
            <person name="Mizoguchi H."/>
            <person name="Goto Y."/>
            <person name="Shimizu F."/>
            <person name="Wakebe H."/>
            <person name="Hishigaki H."/>
            <person name="Watanabe T."/>
            <person name="Sugiyama A."/>
            <person name="Takemoto M."/>
            <person name="Kawakami B."/>
            <person name="Yamazaki M."/>
            <person name="Watanabe K."/>
            <person name="Kumagai A."/>
            <person name="Itakura S."/>
            <person name="Fukuzumi Y."/>
            <person name="Fujimori Y."/>
            <person name="Komiyama M."/>
            <person name="Tashiro H."/>
            <person name="Tanigami A."/>
            <person name="Fujiwara T."/>
            <person name="Ono T."/>
            <person name="Yamada K."/>
            <person name="Fujii Y."/>
            <person name="Ozaki K."/>
            <person name="Hirao M."/>
            <person name="Ohmori Y."/>
            <person name="Kawabata A."/>
            <person name="Hikiji T."/>
            <person name="Kobatake N."/>
            <person name="Inagaki H."/>
            <person name="Ikema Y."/>
            <person name="Okamoto S."/>
            <person name="Okitani R."/>
            <person name="Kawakami T."/>
            <person name="Noguchi S."/>
            <person name="Itoh T."/>
            <person name="Shigeta K."/>
            <person name="Senba T."/>
            <person name="Matsumura K."/>
            <person name="Nakajima Y."/>
            <person name="Mizuno T."/>
            <person name="Morinaga M."/>
            <person name="Sasaki M."/>
            <person name="Togashi T."/>
            <person name="Oyama M."/>
            <person name="Hata H."/>
            <person name="Watanabe M."/>
            <person name="Komatsu T."/>
            <person name="Mizushima-Sugano J."/>
            <person name="Satoh T."/>
            <person name="Shirai Y."/>
            <person name="Takahashi Y."/>
            <person name="Nakagawa K."/>
            <person name="Okumura K."/>
            <person name="Nagase T."/>
            <person name="Nomura N."/>
            <person name="Kikuchi H."/>
            <person name="Masuho Y."/>
            <person name="Yamashita R."/>
            <person name="Nakai K."/>
            <person name="Yada T."/>
            <person name="Nakamura Y."/>
            <person name="Ohara O."/>
            <person name="Isogai T."/>
            <person name="Sugano S."/>
        </authorList>
    </citation>
    <scope>NUCLEOTIDE SEQUENCE [LARGE SCALE MRNA] (ISOFORM 2)</scope>
    <scope>VARIANT LEU-657</scope>
    <source>
        <tissue>Spleen</tissue>
    </source>
</reference>
<reference key="3">
    <citation type="journal article" date="2004" name="Nature">
        <title>The DNA sequence and comparative analysis of human chromosome 10.</title>
        <authorList>
            <person name="Deloukas P."/>
            <person name="Earthrowl M.E."/>
            <person name="Grafham D.V."/>
            <person name="Rubenfield M."/>
            <person name="French L."/>
            <person name="Steward C.A."/>
            <person name="Sims S.K."/>
            <person name="Jones M.C."/>
            <person name="Searle S."/>
            <person name="Scott C."/>
            <person name="Howe K."/>
            <person name="Hunt S.E."/>
            <person name="Andrews T.D."/>
            <person name="Gilbert J.G.R."/>
            <person name="Swarbreck D."/>
            <person name="Ashurst J.L."/>
            <person name="Taylor A."/>
            <person name="Battles J."/>
            <person name="Bird C.P."/>
            <person name="Ainscough R."/>
            <person name="Almeida J.P."/>
            <person name="Ashwell R.I.S."/>
            <person name="Ambrose K.D."/>
            <person name="Babbage A.K."/>
            <person name="Bagguley C.L."/>
            <person name="Bailey J."/>
            <person name="Banerjee R."/>
            <person name="Bates K."/>
            <person name="Beasley H."/>
            <person name="Bray-Allen S."/>
            <person name="Brown A.J."/>
            <person name="Brown J.Y."/>
            <person name="Burford D.C."/>
            <person name="Burrill W."/>
            <person name="Burton J."/>
            <person name="Cahill P."/>
            <person name="Camire D."/>
            <person name="Carter N.P."/>
            <person name="Chapman J.C."/>
            <person name="Clark S.Y."/>
            <person name="Clarke G."/>
            <person name="Clee C.M."/>
            <person name="Clegg S."/>
            <person name="Corby N."/>
            <person name="Coulson A."/>
            <person name="Dhami P."/>
            <person name="Dutta I."/>
            <person name="Dunn M."/>
            <person name="Faulkner L."/>
            <person name="Frankish A."/>
            <person name="Frankland J.A."/>
            <person name="Garner P."/>
            <person name="Garnett J."/>
            <person name="Gribble S."/>
            <person name="Griffiths C."/>
            <person name="Grocock R."/>
            <person name="Gustafson E."/>
            <person name="Hammond S."/>
            <person name="Harley J.L."/>
            <person name="Hart E."/>
            <person name="Heath P.D."/>
            <person name="Ho T.P."/>
            <person name="Hopkins B."/>
            <person name="Horne J."/>
            <person name="Howden P.J."/>
            <person name="Huckle E."/>
            <person name="Hynds C."/>
            <person name="Johnson C."/>
            <person name="Johnson D."/>
            <person name="Kana A."/>
            <person name="Kay M."/>
            <person name="Kimberley A.M."/>
            <person name="Kershaw J.K."/>
            <person name="Kokkinaki M."/>
            <person name="Laird G.K."/>
            <person name="Lawlor S."/>
            <person name="Lee H.M."/>
            <person name="Leongamornlert D.A."/>
            <person name="Laird G."/>
            <person name="Lloyd C."/>
            <person name="Lloyd D.M."/>
            <person name="Loveland J."/>
            <person name="Lovell J."/>
            <person name="McLaren S."/>
            <person name="McLay K.E."/>
            <person name="McMurray A."/>
            <person name="Mashreghi-Mohammadi M."/>
            <person name="Matthews L."/>
            <person name="Milne S."/>
            <person name="Nickerson T."/>
            <person name="Nguyen M."/>
            <person name="Overton-Larty E."/>
            <person name="Palmer S.A."/>
            <person name="Pearce A.V."/>
            <person name="Peck A.I."/>
            <person name="Pelan S."/>
            <person name="Phillimore B."/>
            <person name="Porter K."/>
            <person name="Rice C.M."/>
            <person name="Rogosin A."/>
            <person name="Ross M.T."/>
            <person name="Sarafidou T."/>
            <person name="Sehra H.K."/>
            <person name="Shownkeen R."/>
            <person name="Skuce C.D."/>
            <person name="Smith M."/>
            <person name="Standring L."/>
            <person name="Sycamore N."/>
            <person name="Tester J."/>
            <person name="Thorpe A."/>
            <person name="Torcasso W."/>
            <person name="Tracey A."/>
            <person name="Tromans A."/>
            <person name="Tsolas J."/>
            <person name="Wall M."/>
            <person name="Walsh J."/>
            <person name="Wang H."/>
            <person name="Weinstock K."/>
            <person name="West A.P."/>
            <person name="Willey D.L."/>
            <person name="Whitehead S.L."/>
            <person name="Wilming L."/>
            <person name="Wray P.W."/>
            <person name="Young L."/>
            <person name="Chen Y."/>
            <person name="Lovering R.C."/>
            <person name="Moschonas N.K."/>
            <person name="Siebert R."/>
            <person name="Fechtel K."/>
            <person name="Bentley D."/>
            <person name="Durbin R.M."/>
            <person name="Hubbard T."/>
            <person name="Doucette-Stamm L."/>
            <person name="Beck S."/>
            <person name="Smith D.R."/>
            <person name="Rogers J."/>
        </authorList>
    </citation>
    <scope>NUCLEOTIDE SEQUENCE [LARGE SCALE GENOMIC DNA]</scope>
</reference>
<reference key="4">
    <citation type="journal article" date="2004" name="Genome Res.">
        <title>The status, quality, and expansion of the NIH full-length cDNA project: the Mammalian Gene Collection (MGC).</title>
        <authorList>
            <consortium name="The MGC Project Team"/>
        </authorList>
    </citation>
    <scope>NUCLEOTIDE SEQUENCE [LARGE SCALE MRNA] (ISOFORM 3)</scope>
    <scope>VARIANT ARG-35</scope>
    <source>
        <tissue>Pancreatic cancer</tissue>
    </source>
</reference>
<reference key="5">
    <citation type="journal article" date="2005" name="Biol. Cell">
        <title>FLRG, a new ADAM12-associated protein, modulates osteoclast differentiation.</title>
        <authorList>
            <person name="Bartholin L."/>
            <person name="Destaing O."/>
            <person name="Forissier S."/>
            <person name="Martel S."/>
            <person name="Maguer-Satta V."/>
            <person name="Jurdic P."/>
            <person name="Rimokh R."/>
        </authorList>
    </citation>
    <scope>INTERACTION WITH FST3</scope>
</reference>
<reference key="6">
    <citation type="journal article" date="2012" name="Acta Crystallogr. F">
        <title>Structure of human ADAM-8 catalytic domain complexed with batimastat.</title>
        <authorList>
            <person name="Hall T."/>
            <person name="Shieh H.S."/>
            <person name="Day J.E."/>
            <person name="Caspers N."/>
            <person name="Chrencik J.E."/>
            <person name="Williams J.M."/>
            <person name="Pegg L.E."/>
            <person name="Pauley A.M."/>
            <person name="Moon A.F."/>
            <person name="Krahn J.M."/>
            <person name="Fischer D.H."/>
            <person name="Kiefer J.R."/>
            <person name="Tomasselli A.G."/>
            <person name="Zack M.D."/>
        </authorList>
    </citation>
    <scope>X-RAY CRYSTALLOGRAPHY (2.1 ANGSTROMS) OF 196-403 IN COMPLEX WITH INHIBITOR AND ZINC IONS</scope>
    <scope>COFACTOR</scope>
</reference>